<sequence>MLIFLEVKYMNFHNRKLDEELIDYNISLRILFTILSVAIIMVAFDSLGSSVSDPVGDALCKLIKVFRGNTAKGIAVVGIIVLGIQTLRGKLQWEVALVVVTAIIILFKAPDIVNMVSSDNNSSSCGVS</sequence>
<comment type="subcellular location">
    <subcellularLocation>
        <location evidence="2">Cell membrane</location>
        <topology evidence="2">Multi-pass membrane protein</topology>
    </subcellularLocation>
</comment>
<gene>
    <name type="ordered locus">RP192</name>
</gene>
<proteinExistence type="predicted"/>
<accession>Q9ZDX2</accession>
<protein>
    <recommendedName>
        <fullName>Uncharacterized protein RP192</fullName>
    </recommendedName>
</protein>
<organism>
    <name type="scientific">Rickettsia prowazekii (strain Madrid E)</name>
    <dbReference type="NCBI Taxonomy" id="272947"/>
    <lineage>
        <taxon>Bacteria</taxon>
        <taxon>Pseudomonadati</taxon>
        <taxon>Pseudomonadota</taxon>
        <taxon>Alphaproteobacteria</taxon>
        <taxon>Rickettsiales</taxon>
        <taxon>Rickettsiaceae</taxon>
        <taxon>Rickettsieae</taxon>
        <taxon>Rickettsia</taxon>
        <taxon>typhus group</taxon>
    </lineage>
</organism>
<reference key="1">
    <citation type="journal article" date="1998" name="Nature">
        <title>The genome sequence of Rickettsia prowazekii and the origin of mitochondria.</title>
        <authorList>
            <person name="Andersson S.G.E."/>
            <person name="Zomorodipour A."/>
            <person name="Andersson J.O."/>
            <person name="Sicheritz-Ponten T."/>
            <person name="Alsmark U.C.M."/>
            <person name="Podowski R.M."/>
            <person name="Naeslund A.K."/>
            <person name="Eriksson A.-S."/>
            <person name="Winkler H.H."/>
            <person name="Kurland C.G."/>
        </authorList>
    </citation>
    <scope>NUCLEOTIDE SEQUENCE [LARGE SCALE GENOMIC DNA]</scope>
    <source>
        <strain>Madrid E</strain>
    </source>
</reference>
<keyword id="KW-1003">Cell membrane</keyword>
<keyword id="KW-0472">Membrane</keyword>
<keyword id="KW-1185">Reference proteome</keyword>
<keyword id="KW-0812">Transmembrane</keyword>
<keyword id="KW-1133">Transmembrane helix</keyword>
<evidence type="ECO:0000255" key="1"/>
<evidence type="ECO:0000305" key="2"/>
<name>Y192_RICPR</name>
<feature type="chain" id="PRO_0000101330" description="Uncharacterized protein RP192">
    <location>
        <begin position="1"/>
        <end position="128"/>
    </location>
</feature>
<feature type="transmembrane region" description="Helical" evidence="1">
    <location>
        <begin position="30"/>
        <end position="50"/>
    </location>
</feature>
<feature type="transmembrane region" description="Helical" evidence="1">
    <location>
        <begin position="65"/>
        <end position="85"/>
    </location>
</feature>
<feature type="transmembrane region" description="Helical" evidence="1">
    <location>
        <begin position="93"/>
        <end position="113"/>
    </location>
</feature>
<dbReference type="EMBL" id="AJ235270">
    <property type="protein sequence ID" value="CAA14658.1"/>
    <property type="molecule type" value="Genomic_DNA"/>
</dbReference>
<dbReference type="PIR" id="C71730">
    <property type="entry name" value="C71730"/>
</dbReference>
<dbReference type="RefSeq" id="NP_220581.1">
    <property type="nucleotide sequence ID" value="NC_000963.1"/>
</dbReference>
<dbReference type="SMR" id="Q9ZDX2"/>
<dbReference type="STRING" id="272947.gene:17555274"/>
<dbReference type="EnsemblBacteria" id="CAA14658">
    <property type="protein sequence ID" value="CAA14658"/>
    <property type="gene ID" value="CAA14658"/>
</dbReference>
<dbReference type="KEGG" id="rpr:RP192"/>
<dbReference type="PATRIC" id="fig|272947.5.peg.199"/>
<dbReference type="eggNOG" id="COG3838">
    <property type="taxonomic scope" value="Bacteria"/>
</dbReference>
<dbReference type="HOGENOM" id="CLU_2024977_0_0_5"/>
<dbReference type="OrthoDB" id="7161158at2"/>
<dbReference type="Proteomes" id="UP000002480">
    <property type="component" value="Chromosome"/>
</dbReference>
<dbReference type="GO" id="GO:0005886">
    <property type="term" value="C:plasma membrane"/>
    <property type="evidence" value="ECO:0007669"/>
    <property type="project" value="UniProtKB-SubCell"/>
</dbReference>
<dbReference type="InterPro" id="IPR007039">
    <property type="entry name" value="TrbC/VirB2"/>
</dbReference>
<dbReference type="Pfam" id="PF04956">
    <property type="entry name" value="TrbC"/>
    <property type="match status" value="1"/>
</dbReference>